<proteinExistence type="evidence at protein level"/>
<protein>
    <recommendedName>
        <fullName evidence="10 11 12">Longistatin</fullName>
        <ecNumber evidence="7">3.4.21.-</ecNumber>
    </recommendedName>
</protein>
<name>LONG_HAELO</name>
<gene>
    <name evidence="14" type="primary">A01M12</name>
</gene>
<dbReference type="EC" id="3.4.21.-" evidence="7"/>
<dbReference type="EMBL" id="AB519820">
    <property type="protein sequence ID" value="BAI99729.1"/>
    <property type="molecule type" value="mRNA"/>
</dbReference>
<dbReference type="SMR" id="D4QD81"/>
<dbReference type="GO" id="GO:0005737">
    <property type="term" value="C:cytoplasm"/>
    <property type="evidence" value="ECO:0007669"/>
    <property type="project" value="UniProtKB-SubCell"/>
</dbReference>
<dbReference type="GO" id="GO:0005615">
    <property type="term" value="C:extracellular space"/>
    <property type="evidence" value="ECO:0000314"/>
    <property type="project" value="UniProtKB"/>
</dbReference>
<dbReference type="GO" id="GO:0005509">
    <property type="term" value="F:calcium ion binding"/>
    <property type="evidence" value="ECO:0000314"/>
    <property type="project" value="UniProtKB"/>
</dbReference>
<dbReference type="GO" id="GO:0008236">
    <property type="term" value="F:serine-type peptidase activity"/>
    <property type="evidence" value="ECO:0000314"/>
    <property type="project" value="UniProtKB"/>
</dbReference>
<dbReference type="GO" id="GO:0044485">
    <property type="term" value="P:venom-mediated fibrinogenolysis in another organism"/>
    <property type="evidence" value="ECO:0000314"/>
    <property type="project" value="UniProtKB"/>
</dbReference>
<dbReference type="GO" id="GO:0044484">
    <property type="term" value="P:venom-mediated fibrinolysis"/>
    <property type="evidence" value="ECO:0000314"/>
    <property type="project" value="UniProtKB"/>
</dbReference>
<dbReference type="Gene3D" id="1.10.238.10">
    <property type="entry name" value="EF-hand"/>
    <property type="match status" value="1"/>
</dbReference>
<dbReference type="InterPro" id="IPR011992">
    <property type="entry name" value="EF-hand-dom_pair"/>
</dbReference>
<dbReference type="InterPro" id="IPR018247">
    <property type="entry name" value="EF_Hand_1_Ca_BS"/>
</dbReference>
<dbReference type="InterPro" id="IPR002048">
    <property type="entry name" value="EF_hand_dom"/>
</dbReference>
<dbReference type="InterPro" id="IPR052110">
    <property type="entry name" value="ER-Golgi_Adhesion_Reg"/>
</dbReference>
<dbReference type="PANTHER" id="PTHR23104:SF17">
    <property type="entry name" value="EF-HAND DOMAIN-CONTAINING PROTEIN"/>
    <property type="match status" value="1"/>
</dbReference>
<dbReference type="PANTHER" id="PTHR23104">
    <property type="entry name" value="MULTIPLE COAGULATION FACTOR DEFICIENCY PROTEIN 2 NEURAL STEM CELL DERIVED NEURONAL SURVIVAL PROTEIN"/>
    <property type="match status" value="1"/>
</dbReference>
<dbReference type="SUPFAM" id="SSF47473">
    <property type="entry name" value="EF-hand"/>
    <property type="match status" value="1"/>
</dbReference>
<dbReference type="PROSITE" id="PS00018">
    <property type="entry name" value="EF_HAND_1"/>
    <property type="match status" value="2"/>
</dbReference>
<dbReference type="PROSITE" id="PS50222">
    <property type="entry name" value="EF_HAND_2"/>
    <property type="match status" value="1"/>
</dbReference>
<reference evidence="14" key="1">
    <citation type="journal article" date="2010" name="Int. J. Parasitol.">
        <title>Longistatin, a novel EF-hand protein from the ixodid tick Haemaphysalis longicornis, is required for acquisition of host blood-meals.</title>
        <authorList>
            <person name="Anisuzzaman X."/>
            <person name="Islam M.K."/>
            <person name="Miyoshi T."/>
            <person name="Alim M.A."/>
            <person name="Hatta T."/>
            <person name="Yamaji K."/>
            <person name="Matsumoto Y."/>
            <person name="Fujisaki K."/>
            <person name="Tsuji N."/>
        </authorList>
    </citation>
    <scope>NUCLEOTIDE SEQUENCE [MRNA]</scope>
    <scope>FUNCTION</scope>
    <scope>SUBCELLULAR LOCATION</scope>
    <scope>TISSUE SPECIFICITY</scope>
    <scope>DEVELOPMENTAL STAGE</scope>
    <scope>INDUCTION BY BLOOD FEEDING</scope>
</reference>
<reference evidence="13" key="2">
    <citation type="journal article" date="2011" name="Biochem. Biophys. Res. Commun.">
        <title>Longistatin, a novel plasminogen activator from vector ticks, is resistant to plasminogen activator inhibitor-1.</title>
        <authorList>
            <person name="Anisuzzaman X."/>
            <person name="Khyrul Islam M."/>
            <person name="Abdul Alim M."/>
            <person name="Miyoshi T."/>
            <person name="Hatta T."/>
            <person name="Yamaji K."/>
            <person name="Matsumoto Y."/>
            <person name="Fujisaki K."/>
            <person name="Tsuji N."/>
        </authorList>
    </citation>
    <scope>FUNCTION</scope>
    <scope>ACTIVITY REGULATION</scope>
</reference>
<reference evidence="13" key="3">
    <citation type="journal article" date="2011" name="PLoS Pathog.">
        <title>Longistatin, a plasminogen activator, is key to the availability of blood-meals for ixodid ticks.</title>
        <authorList>
            <person name="Anisuzzaman X."/>
            <person name="Islam M.K."/>
            <person name="Alim M.A."/>
            <person name="Miyoshi T."/>
            <person name="Hatta T."/>
            <person name="Yamaji K."/>
            <person name="Matsumoto Y."/>
            <person name="Fujisaki K."/>
            <person name="Tsuji N."/>
        </authorList>
    </citation>
    <scope>FUNCTION</scope>
    <scope>INTERACTION WITH HOST FIBRIN</scope>
    <scope>TISSUE SPECIFICITY</scope>
    <scope>INDUCTION BY BLOOD FEEDING</scope>
    <scope>DISRUPTION PHENOTYPE</scope>
</reference>
<reference evidence="13" key="4">
    <citation type="journal article" date="2012" name="Mol. Biochem. Parasitol.">
        <title>Longistatin is an unconventional serine protease and induces protective immunity against tick infestation.</title>
        <authorList>
            <person name="Anisuzzaman X."/>
            <person name="Islam M.K."/>
            <person name="Alim M.A."/>
            <person name="Miyoshi T."/>
            <person name="Hatta T."/>
            <person name="Yamaji K."/>
            <person name="Matsumoto Y."/>
            <person name="Fujisaki K."/>
            <person name="Tsuji N."/>
        </authorList>
    </citation>
    <scope>FUNCTION</scope>
    <scope>CATALYTIC ACTIVITY</scope>
    <scope>ACTIVITY REGULATION</scope>
    <scope>BIOPHYSICOCHEMICAL PROPERTIES</scope>
    <scope>TISSUE SPECIFICITY</scope>
</reference>
<reference evidence="13" key="5">
    <citation type="journal article" date="2013" name="Methods Mol. Biol.">
        <title>Longistatin, an EF-hand Ca2+-binding protein from vector tick: identification, purification, and characterization.</title>
        <authorList>
            <person name="Anisuzzaman X."/>
            <person name="Islam M.K."/>
            <person name="Alim M.A."/>
            <person name="Tsuji N."/>
        </authorList>
    </citation>
    <scope>FUNCTION</scope>
    <scope>DEVELOPMENTAL STAGE</scope>
    <scope>INDUCTION BY BLOOD FEEDING</scope>
</reference>
<reference evidence="13" key="6">
    <citation type="journal article" date="2014" name="J. Clin. Invest.">
        <title>Longistatin in tick saliva blocks advanced glycation end-product receptor activation.</title>
        <authorList>
            <person name="Anisuzzaman X."/>
            <person name="Hatta T."/>
            <person name="Miyoshi T."/>
            <person name="Matsubayashi M."/>
            <person name="Islam M.K."/>
            <person name="Alim M.A."/>
            <person name="Anas M.A."/>
            <person name="Hasan M.M."/>
            <person name="Matsumoto Y."/>
            <person name="Yamamoto Y."/>
            <person name="Yamamoto H."/>
            <person name="Fujisaki K."/>
            <person name="Tsuji N."/>
        </authorList>
    </citation>
    <scope>FUNCTION</scope>
    <scope>INTERACTION WITH HUMAN AGER</scope>
    <scope>DISRUPTION PHENOTYPE</scope>
</reference>
<keyword id="KW-1203">Blood coagulation cascade inhibiting toxin</keyword>
<keyword id="KW-0106">Calcium</keyword>
<keyword id="KW-0963">Cytoplasm</keyword>
<keyword id="KW-1199">Hemostasis impairing toxin</keyword>
<keyword id="KW-0378">Hydrolase</keyword>
<keyword id="KW-0479">Metal-binding</keyword>
<keyword id="KW-0645">Protease</keyword>
<keyword id="KW-0677">Repeat</keyword>
<keyword id="KW-0964">Secreted</keyword>
<keyword id="KW-0720">Serine protease</keyword>
<keyword id="KW-0732">Signal</keyword>
<keyword id="KW-0800">Toxin</keyword>
<organism evidence="14">
    <name type="scientific">Haemaphysalis longicornis</name>
    <name type="common">Bush tick</name>
    <dbReference type="NCBI Taxonomy" id="44386"/>
    <lineage>
        <taxon>Eukaryota</taxon>
        <taxon>Metazoa</taxon>
        <taxon>Ecdysozoa</taxon>
        <taxon>Arthropoda</taxon>
        <taxon>Chelicerata</taxon>
        <taxon>Arachnida</taxon>
        <taxon>Acari</taxon>
        <taxon>Parasitiformes</taxon>
        <taxon>Ixodida</taxon>
        <taxon>Ixodoidea</taxon>
        <taxon>Ixodidae</taxon>
        <taxon>Haemaphysalinae</taxon>
        <taxon>Haemaphysalis</taxon>
    </lineage>
</organism>
<evidence type="ECO:0000255" key="1"/>
<evidence type="ECO:0000255" key="2">
    <source>
        <dbReference type="PROSITE-ProRule" id="PRU00448"/>
    </source>
</evidence>
<evidence type="ECO:0000255" key="3">
    <source>
        <dbReference type="PROSITE-ProRule" id="PRU10142"/>
    </source>
</evidence>
<evidence type="ECO:0000269" key="4">
    <source>
    </source>
</evidence>
<evidence type="ECO:0000269" key="5">
    <source>
    </source>
</evidence>
<evidence type="ECO:0000269" key="6">
    <source>
    </source>
</evidence>
<evidence type="ECO:0000269" key="7">
    <source>
    </source>
</evidence>
<evidence type="ECO:0000269" key="8">
    <source>
    </source>
</evidence>
<evidence type="ECO:0000269" key="9">
    <source>
    </source>
</evidence>
<evidence type="ECO:0000303" key="10">
    <source>
    </source>
</evidence>
<evidence type="ECO:0000303" key="11">
    <source>
    </source>
</evidence>
<evidence type="ECO:0000303" key="12">
    <source>
    </source>
</evidence>
<evidence type="ECO:0000305" key="13"/>
<evidence type="ECO:0000312" key="14">
    <source>
        <dbReference type="EMBL" id="BAI99729.1"/>
    </source>
</evidence>
<comment type="function">
    <text evidence="4 5 6 7 8 9">Anticoagulant and fibrinolytic protease that modulates blood feeding of ticks on vertebrate hosts (PubMed:21423674). Degrades host fibrinogen and delays fibrin clot formation (PubMed:21423674). Promotes lysis of fibrin clots in the host by activating host plasminogen in the presence of soluble fibrin (PubMed:21423674, PubMed:21925150). Binds Ca(2+) (PubMed:19968997, PubMed:23296609). Hydrolyzes serine protease-specific substrates (PubMed:22206819). Required for the formation of a blood pool, an accumulation of blood and tissue fluid developed at the tick's feeding site (PubMed:21423674). Blocks activation of host AGER/RAGE (PubMed:25401185). Reduces AGER/RAGE-dependent production of reactive oxygen species (ROS) in human endothelial cells (PubMed:25401185). Prevents AGER/RAGE-dependent activation of NF-kappa-B and suppresses expression of adhesion molecules, such as VCAM1, ICAM1 and SELE, and secretion of cytokines, such as CSF3/GCSF and TGF-beta, in human endothelial cells (PubMed:25401185). Suppresses RAGE/AGER-mediated migration of mouse peritoneal resident cells (PubMed:25401185). Reduces AGER/RAGE-mediated inflammation in mice tissues (PubMed:25401185).</text>
</comment>
<comment type="activity regulation">
    <text evidence="6 7">Resistant to inhibition by host SERPINE1 (PubMed:21925150). Inhibited by PMSF, aprotinin, antipain and leupeptin (PubMed:22206819). Inhibited by Zn(2+) (PubMed:22206819).</text>
</comment>
<comment type="biophysicochemical properties">
    <phDependence>
        <text>Optimum pH is 7.0.</text>
    </phDependence>
    <temperatureDependence>
        <text evidence="7">Optimum temperature is 37 degrees Celsius. Active from 20 to 45 degrees Celsius.</text>
    </temperatureDependence>
</comment>
<comment type="subunit">
    <text evidence="5 9">Interacts with host fibrin (PubMed:21423674). Interacts with human RAGE/AGER (PubMed:25401185).</text>
</comment>
<comment type="subcellular location">
    <subcellularLocation>
        <location evidence="4">Secreted</location>
    </subcellularLocation>
    <subcellularLocation>
        <location evidence="4">Cytoplasm</location>
    </subcellularLocation>
</comment>
<comment type="tissue specificity">
    <text evidence="4 5 7">Saliva (at protein level) (PubMed:19968997, PubMed:22206819). Salivary gland (at protein level) (PubMed:19968997, PubMed:21423674, PubMed:22206819). Not detected in midgut, ovary, trachea, Malpighian tubule system, synganglion and cuticle (PubMed:19968997).</text>
</comment>
<comment type="developmental stage">
    <text evidence="4 8">Expressed in larva, nymph and adult ticks (at protein level) (PubMed:19968997, PubMed:23296609). Expressed in eggs (PubMed:19968997).</text>
</comment>
<comment type="induction">
    <text evidence="4 5 8">Up-regulated after blood feeding (PubMed:19968997, PubMed:21423674, PubMed:23296609). The highest expression is observed at 96 hours after feeding and in fully engorged adult ticks (PubMed:19968997, PubMed:21423674).</text>
</comment>
<comment type="disruption phenotype">
    <text evidence="5 9">RNAi-mediated knockdown results in impaired blood feeding of ticks on a vertebrate host (PubMed:21423674). Impaired development of a blood pool, an accumulation of blood and tissue fluid formed at the tick's feeding site (PubMed:21423674, PubMed:25401185). Massive infiltration of host inflammatory cells at the bite site (PubMed:25401185). Increased expression of host cytokines, such as IL5, TNF/TNF-alpha, PTGS2/COX2 and CCL12/MCP5 (PubMed:25401185). No significant effects on tick activity and health during the incubation period (PubMed:21423674). No significant effects on tick attachment to a host (PubMed:21423674).</text>
</comment>
<comment type="miscellaneous">
    <text evidence="7">Immunization of mice against the protein induces protective immune response and results in slower tick feeding and smaller blood meals.</text>
</comment>
<sequence>MTHRRLLWALCVAALLGVVAAQAGDQQQMQPNEADALRKKWSAVEVVRDLGHIKKDLAKMIELEGAGALSQDELYFYYFRMHDFDNNNKLDGQEMMAAMFHTNHHEEDDEHDGKVPLIIPEQDIASYVDSVLRADKNQDGFISYPELRTSDLTNQI</sequence>
<accession>D4QD81</accession>
<feature type="signal peptide" evidence="1">
    <location>
        <begin position="1"/>
        <end position="21"/>
    </location>
</feature>
<feature type="chain" id="PRO_5003062144" description="Longistatin" evidence="1">
    <location>
        <begin position="22"/>
        <end position="156"/>
    </location>
</feature>
<feature type="domain" description="EF-hand 1" evidence="2">
    <location>
        <begin position="70"/>
        <end position="105"/>
    </location>
</feature>
<feature type="domain" description="EF-hand 2" evidence="13">
    <location>
        <begin position="123"/>
        <end position="156"/>
    </location>
</feature>
<feature type="binding site" evidence="3">
    <location>
        <position position="83"/>
    </location>
    <ligand>
        <name>Ca(2+)</name>
        <dbReference type="ChEBI" id="CHEBI:29108"/>
        <label>1</label>
    </ligand>
</feature>
<feature type="binding site" evidence="3">
    <location>
        <position position="85"/>
    </location>
    <ligand>
        <name>Ca(2+)</name>
        <dbReference type="ChEBI" id="CHEBI:29108"/>
        <label>1</label>
    </ligand>
</feature>
<feature type="binding site" evidence="3">
    <location>
        <position position="87"/>
    </location>
    <ligand>
        <name>Ca(2+)</name>
        <dbReference type="ChEBI" id="CHEBI:29108"/>
        <label>1</label>
    </ligand>
</feature>
<feature type="binding site" evidence="3">
    <location>
        <position position="89"/>
    </location>
    <ligand>
        <name>Ca(2+)</name>
        <dbReference type="ChEBI" id="CHEBI:29108"/>
        <label>1</label>
    </ligand>
</feature>
<feature type="binding site" evidence="3">
    <location>
        <position position="94"/>
    </location>
    <ligand>
        <name>Ca(2+)</name>
        <dbReference type="ChEBI" id="CHEBI:29108"/>
        <label>1</label>
    </ligand>
</feature>
<feature type="binding site" evidence="3">
    <location>
        <position position="135"/>
    </location>
    <ligand>
        <name>Ca(2+)</name>
        <dbReference type="ChEBI" id="CHEBI:29108"/>
        <label>2</label>
    </ligand>
</feature>
<feature type="binding site" evidence="3">
    <location>
        <position position="137"/>
    </location>
    <ligand>
        <name>Ca(2+)</name>
        <dbReference type="ChEBI" id="CHEBI:29108"/>
        <label>2</label>
    </ligand>
</feature>
<feature type="binding site" evidence="3">
    <location>
        <position position="139"/>
    </location>
    <ligand>
        <name>Ca(2+)</name>
        <dbReference type="ChEBI" id="CHEBI:29108"/>
        <label>2</label>
    </ligand>
</feature>
<feature type="binding site" evidence="3">
    <location>
        <position position="141"/>
    </location>
    <ligand>
        <name>Ca(2+)</name>
        <dbReference type="ChEBI" id="CHEBI:29108"/>
        <label>2</label>
    </ligand>
</feature>
<feature type="binding site" evidence="3">
    <location>
        <position position="146"/>
    </location>
    <ligand>
        <name>Ca(2+)</name>
        <dbReference type="ChEBI" id="CHEBI:29108"/>
        <label>2</label>
    </ligand>
</feature>